<gene>
    <name evidence="2" type="primary">rpsL</name>
    <name type="ordered locus">Daro_0314</name>
</gene>
<feature type="chain" id="PRO_0000226387" description="Small ribosomal subunit protein uS12">
    <location>
        <begin position="1"/>
        <end position="125"/>
    </location>
</feature>
<feature type="region of interest" description="Disordered" evidence="3">
    <location>
        <begin position="100"/>
        <end position="125"/>
    </location>
</feature>
<feature type="compositionally biased region" description="Basic residues" evidence="3">
    <location>
        <begin position="113"/>
        <end position="125"/>
    </location>
</feature>
<feature type="modified residue" description="3-methylthioaspartic acid" evidence="1">
    <location>
        <position position="89"/>
    </location>
</feature>
<protein>
    <recommendedName>
        <fullName evidence="2">Small ribosomal subunit protein uS12</fullName>
    </recommendedName>
    <alternativeName>
        <fullName evidence="4">30S ribosomal protein S12</fullName>
    </alternativeName>
</protein>
<reference key="1">
    <citation type="journal article" date="2009" name="BMC Genomics">
        <title>Metabolic analysis of the soil microbe Dechloromonas aromatica str. RCB: indications of a surprisingly complex life-style and cryptic anaerobic pathways for aromatic degradation.</title>
        <authorList>
            <person name="Salinero K.K."/>
            <person name="Keller K."/>
            <person name="Feil W.S."/>
            <person name="Feil H."/>
            <person name="Trong S."/>
            <person name="Di Bartolo G."/>
            <person name="Lapidus A."/>
        </authorList>
    </citation>
    <scope>NUCLEOTIDE SEQUENCE [LARGE SCALE GENOMIC DNA]</scope>
    <source>
        <strain>RCB</strain>
    </source>
</reference>
<accession>Q47JA8</accession>
<proteinExistence type="inferred from homology"/>
<evidence type="ECO:0000250" key="1"/>
<evidence type="ECO:0000255" key="2">
    <source>
        <dbReference type="HAMAP-Rule" id="MF_00403"/>
    </source>
</evidence>
<evidence type="ECO:0000256" key="3">
    <source>
        <dbReference type="SAM" id="MobiDB-lite"/>
    </source>
</evidence>
<evidence type="ECO:0000305" key="4"/>
<comment type="function">
    <text evidence="2">With S4 and S5 plays an important role in translational accuracy.</text>
</comment>
<comment type="function">
    <text evidence="2">Interacts with and stabilizes bases of the 16S rRNA that are involved in tRNA selection in the A site and with the mRNA backbone. Located at the interface of the 30S and 50S subunits, it traverses the body of the 30S subunit contacting proteins on the other side and probably holding the rRNA structure together. The combined cluster of proteins S8, S12 and S17 appears to hold together the shoulder and platform of the 30S subunit.</text>
</comment>
<comment type="subunit">
    <text evidence="2">Part of the 30S ribosomal subunit. Contacts proteins S8 and S17. May interact with IF1 in the 30S initiation complex.</text>
</comment>
<comment type="similarity">
    <text evidence="2">Belongs to the universal ribosomal protein uS12 family.</text>
</comment>
<name>RS12_DECAR</name>
<dbReference type="EMBL" id="CP000089">
    <property type="protein sequence ID" value="AAZ45073.1"/>
    <property type="molecule type" value="Genomic_DNA"/>
</dbReference>
<dbReference type="SMR" id="Q47JA8"/>
<dbReference type="STRING" id="159087.Daro_0314"/>
<dbReference type="KEGG" id="dar:Daro_0314"/>
<dbReference type="eggNOG" id="COG0048">
    <property type="taxonomic scope" value="Bacteria"/>
</dbReference>
<dbReference type="HOGENOM" id="CLU_104295_1_2_4"/>
<dbReference type="OrthoDB" id="9802366at2"/>
<dbReference type="GO" id="GO:0015935">
    <property type="term" value="C:small ribosomal subunit"/>
    <property type="evidence" value="ECO:0007669"/>
    <property type="project" value="InterPro"/>
</dbReference>
<dbReference type="GO" id="GO:0019843">
    <property type="term" value="F:rRNA binding"/>
    <property type="evidence" value="ECO:0007669"/>
    <property type="project" value="UniProtKB-UniRule"/>
</dbReference>
<dbReference type="GO" id="GO:0003735">
    <property type="term" value="F:structural constituent of ribosome"/>
    <property type="evidence" value="ECO:0007669"/>
    <property type="project" value="InterPro"/>
</dbReference>
<dbReference type="GO" id="GO:0000049">
    <property type="term" value="F:tRNA binding"/>
    <property type="evidence" value="ECO:0007669"/>
    <property type="project" value="UniProtKB-UniRule"/>
</dbReference>
<dbReference type="GO" id="GO:0006412">
    <property type="term" value="P:translation"/>
    <property type="evidence" value="ECO:0007669"/>
    <property type="project" value="UniProtKB-UniRule"/>
</dbReference>
<dbReference type="CDD" id="cd03368">
    <property type="entry name" value="Ribosomal_S12"/>
    <property type="match status" value="1"/>
</dbReference>
<dbReference type="FunFam" id="2.40.50.140:FF:000001">
    <property type="entry name" value="30S ribosomal protein S12"/>
    <property type="match status" value="1"/>
</dbReference>
<dbReference type="Gene3D" id="2.40.50.140">
    <property type="entry name" value="Nucleic acid-binding proteins"/>
    <property type="match status" value="1"/>
</dbReference>
<dbReference type="HAMAP" id="MF_00403_B">
    <property type="entry name" value="Ribosomal_uS12_B"/>
    <property type="match status" value="1"/>
</dbReference>
<dbReference type="InterPro" id="IPR012340">
    <property type="entry name" value="NA-bd_OB-fold"/>
</dbReference>
<dbReference type="InterPro" id="IPR006032">
    <property type="entry name" value="Ribosomal_uS12"/>
</dbReference>
<dbReference type="InterPro" id="IPR005679">
    <property type="entry name" value="Ribosomal_uS12_bac"/>
</dbReference>
<dbReference type="NCBIfam" id="TIGR00981">
    <property type="entry name" value="rpsL_bact"/>
    <property type="match status" value="1"/>
</dbReference>
<dbReference type="PANTHER" id="PTHR11652">
    <property type="entry name" value="30S RIBOSOMAL PROTEIN S12 FAMILY MEMBER"/>
    <property type="match status" value="1"/>
</dbReference>
<dbReference type="Pfam" id="PF00164">
    <property type="entry name" value="Ribosom_S12_S23"/>
    <property type="match status" value="1"/>
</dbReference>
<dbReference type="PIRSF" id="PIRSF002133">
    <property type="entry name" value="Ribosomal_S12/S23"/>
    <property type="match status" value="1"/>
</dbReference>
<dbReference type="PRINTS" id="PR01034">
    <property type="entry name" value="RIBOSOMALS12"/>
</dbReference>
<dbReference type="SUPFAM" id="SSF50249">
    <property type="entry name" value="Nucleic acid-binding proteins"/>
    <property type="match status" value="1"/>
</dbReference>
<dbReference type="PROSITE" id="PS00055">
    <property type="entry name" value="RIBOSOMAL_S12"/>
    <property type="match status" value="1"/>
</dbReference>
<organism>
    <name type="scientific">Dechloromonas aromatica (strain RCB)</name>
    <dbReference type="NCBI Taxonomy" id="159087"/>
    <lineage>
        <taxon>Bacteria</taxon>
        <taxon>Pseudomonadati</taxon>
        <taxon>Pseudomonadota</taxon>
        <taxon>Betaproteobacteria</taxon>
        <taxon>Rhodocyclales</taxon>
        <taxon>Azonexaceae</taxon>
        <taxon>Dechloromonas</taxon>
    </lineage>
</organism>
<keyword id="KW-0488">Methylation</keyword>
<keyword id="KW-0687">Ribonucleoprotein</keyword>
<keyword id="KW-0689">Ribosomal protein</keyword>
<keyword id="KW-0694">RNA-binding</keyword>
<keyword id="KW-0699">rRNA-binding</keyword>
<keyword id="KW-0820">tRNA-binding</keyword>
<sequence length="125" mass="13905">MPTINQLVRKPRVAEKAKSKVPALEKCPQKRGVCTRVYTTTPKKPNSALRKVCKVRLTNGFEVISYIGGEGHNLQEHSVVLIRGGRVKDLPGVRYHTVRGSLDTQGVKDRKQSRSKYGAKRPKAA</sequence>